<protein>
    <recommendedName>
        <fullName evidence="1">K(+)/H(+) antiporter NhaP2</fullName>
    </recommendedName>
    <alternativeName>
        <fullName evidence="1">Potassium/proton antiporter NhaP2</fullName>
    </alternativeName>
</protein>
<dbReference type="EMBL" id="CP000886">
    <property type="protein sequence ID" value="ABX66825.1"/>
    <property type="molecule type" value="Genomic_DNA"/>
</dbReference>
<dbReference type="RefSeq" id="WP_000338376.1">
    <property type="nucleotide sequence ID" value="NC_010102.1"/>
</dbReference>
<dbReference type="SMR" id="A9MVW9"/>
<dbReference type="KEGG" id="spq:SPAB_01418"/>
<dbReference type="PATRIC" id="fig|1016998.12.peg.1337"/>
<dbReference type="HOGENOM" id="CLU_005912_9_2_6"/>
<dbReference type="BioCyc" id="SENT1016998:SPAB_RS05805-MONOMER"/>
<dbReference type="Proteomes" id="UP000008556">
    <property type="component" value="Chromosome"/>
</dbReference>
<dbReference type="GO" id="GO:0005886">
    <property type="term" value="C:plasma membrane"/>
    <property type="evidence" value="ECO:0007669"/>
    <property type="project" value="UniProtKB-SubCell"/>
</dbReference>
<dbReference type="GO" id="GO:0050660">
    <property type="term" value="F:flavin adenine dinucleotide binding"/>
    <property type="evidence" value="ECO:0007669"/>
    <property type="project" value="InterPro"/>
</dbReference>
<dbReference type="GO" id="GO:0015386">
    <property type="term" value="F:potassium:proton antiporter activity"/>
    <property type="evidence" value="ECO:0007669"/>
    <property type="project" value="UniProtKB-UniRule"/>
</dbReference>
<dbReference type="GO" id="GO:0006884">
    <property type="term" value="P:cell volume homeostasis"/>
    <property type="evidence" value="ECO:0007669"/>
    <property type="project" value="InterPro"/>
</dbReference>
<dbReference type="FunFam" id="1.20.1530.20:FF:000002">
    <property type="entry name" value="K(+)/H(+) antiporter NhaP2"/>
    <property type="match status" value="1"/>
</dbReference>
<dbReference type="Gene3D" id="1.20.1530.20">
    <property type="match status" value="1"/>
</dbReference>
<dbReference type="Gene3D" id="3.30.465.10">
    <property type="match status" value="1"/>
</dbReference>
<dbReference type="Gene3D" id="3.30.70.1450">
    <property type="entry name" value="Regulator of K+ conductance, C-terminal domain"/>
    <property type="match status" value="1"/>
</dbReference>
<dbReference type="HAMAP" id="MF_01075">
    <property type="entry name" value="NhaP2"/>
    <property type="match status" value="1"/>
</dbReference>
<dbReference type="InterPro" id="IPR006153">
    <property type="entry name" value="Cation/H_exchanger_TM"/>
</dbReference>
<dbReference type="InterPro" id="IPR036318">
    <property type="entry name" value="FAD-bd_PCMH-like_sf"/>
</dbReference>
<dbReference type="InterPro" id="IPR016169">
    <property type="entry name" value="FAD-bd_PCMH_sub2"/>
</dbReference>
<dbReference type="InterPro" id="IPR038770">
    <property type="entry name" value="Na+/solute_symporter_sf"/>
</dbReference>
<dbReference type="InterPro" id="IPR023729">
    <property type="entry name" value="NhaP2"/>
</dbReference>
<dbReference type="InterPro" id="IPR006037">
    <property type="entry name" value="RCK_C"/>
</dbReference>
<dbReference type="InterPro" id="IPR036721">
    <property type="entry name" value="RCK_C_sf"/>
</dbReference>
<dbReference type="InterPro" id="IPR005170">
    <property type="entry name" value="Transptr-assoc_dom"/>
</dbReference>
<dbReference type="NCBIfam" id="NF003714">
    <property type="entry name" value="PRK05326.1-1"/>
    <property type="match status" value="1"/>
</dbReference>
<dbReference type="NCBIfam" id="NF003715">
    <property type="entry name" value="PRK05326.1-2"/>
    <property type="match status" value="1"/>
</dbReference>
<dbReference type="NCBIfam" id="NF003716">
    <property type="entry name" value="PRK05326.1-3"/>
    <property type="match status" value="1"/>
</dbReference>
<dbReference type="PANTHER" id="PTHR32507:SF7">
    <property type="entry name" value="K(+)_H(+) ANTIPORTER NHAP2"/>
    <property type="match status" value="1"/>
</dbReference>
<dbReference type="PANTHER" id="PTHR32507">
    <property type="entry name" value="NA(+)/H(+) ANTIPORTER 1"/>
    <property type="match status" value="1"/>
</dbReference>
<dbReference type="Pfam" id="PF03471">
    <property type="entry name" value="CorC_HlyC"/>
    <property type="match status" value="1"/>
</dbReference>
<dbReference type="Pfam" id="PF00999">
    <property type="entry name" value="Na_H_Exchanger"/>
    <property type="match status" value="1"/>
</dbReference>
<dbReference type="Pfam" id="PF02080">
    <property type="entry name" value="TrkA_C"/>
    <property type="match status" value="1"/>
</dbReference>
<dbReference type="SMART" id="SM01091">
    <property type="entry name" value="CorC_HlyC"/>
    <property type="match status" value="1"/>
</dbReference>
<dbReference type="SUPFAM" id="SSF56176">
    <property type="entry name" value="FAD-binding/transporter-associated domain-like"/>
    <property type="match status" value="1"/>
</dbReference>
<dbReference type="SUPFAM" id="SSF116726">
    <property type="entry name" value="TrkA C-terminal domain-like"/>
    <property type="match status" value="1"/>
</dbReference>
<dbReference type="PROSITE" id="PS51202">
    <property type="entry name" value="RCK_C"/>
    <property type="match status" value="1"/>
</dbReference>
<evidence type="ECO:0000255" key="1">
    <source>
        <dbReference type="HAMAP-Rule" id="MF_01075"/>
    </source>
</evidence>
<keyword id="KW-0050">Antiport</keyword>
<keyword id="KW-0997">Cell inner membrane</keyword>
<keyword id="KW-1003">Cell membrane</keyword>
<keyword id="KW-0406">Ion transport</keyword>
<keyword id="KW-0472">Membrane</keyword>
<keyword id="KW-0630">Potassium</keyword>
<keyword id="KW-0633">Potassium transport</keyword>
<keyword id="KW-0812">Transmembrane</keyword>
<keyword id="KW-1133">Transmembrane helix</keyword>
<keyword id="KW-0813">Transport</keyword>
<comment type="function">
    <text evidence="1">K(+)/H(+) antiporter that extrudes potassium in exchange for external protons and maintains the internal concentration of potassium under toxic levels.</text>
</comment>
<comment type="catalytic activity">
    <reaction evidence="1">
        <text>K(+)(in) + H(+)(out) = K(+)(out) + H(+)(in)</text>
        <dbReference type="Rhea" id="RHEA:29467"/>
        <dbReference type="ChEBI" id="CHEBI:15378"/>
        <dbReference type="ChEBI" id="CHEBI:29103"/>
    </reaction>
    <physiologicalReaction direction="left-to-right" evidence="1">
        <dbReference type="Rhea" id="RHEA:29468"/>
    </physiologicalReaction>
</comment>
<comment type="subcellular location">
    <subcellularLocation>
        <location evidence="1">Cell inner membrane</location>
        <topology evidence="1">Multi-pass membrane protein</topology>
    </subcellularLocation>
</comment>
<comment type="similarity">
    <text evidence="1">Belongs to the monovalent cation:proton antiporter 1 (CPA1) transporter (TC 2.A.36) family. NhaP2 subfamily.</text>
</comment>
<organism>
    <name type="scientific">Salmonella paratyphi B (strain ATCC BAA-1250 / SPB7)</name>
    <dbReference type="NCBI Taxonomy" id="1016998"/>
    <lineage>
        <taxon>Bacteria</taxon>
        <taxon>Pseudomonadati</taxon>
        <taxon>Pseudomonadota</taxon>
        <taxon>Gammaproteobacteria</taxon>
        <taxon>Enterobacterales</taxon>
        <taxon>Enterobacteriaceae</taxon>
        <taxon>Salmonella</taxon>
    </lineage>
</organism>
<feature type="chain" id="PRO_1000084513" description="K(+)/H(+) antiporter NhaP2">
    <location>
        <begin position="1"/>
        <end position="577"/>
    </location>
</feature>
<feature type="transmembrane region" description="Helical" evidence="1">
    <location>
        <begin position="3"/>
        <end position="23"/>
    </location>
</feature>
<feature type="transmembrane region" description="Helical" evidence="1">
    <location>
        <begin position="30"/>
        <end position="50"/>
    </location>
</feature>
<feature type="transmembrane region" description="Helical" evidence="1">
    <location>
        <begin position="58"/>
        <end position="78"/>
    </location>
</feature>
<feature type="transmembrane region" description="Helical" evidence="1">
    <location>
        <begin position="87"/>
        <end position="107"/>
    </location>
</feature>
<feature type="transmembrane region" description="Helical" evidence="1">
    <location>
        <begin position="109"/>
        <end position="129"/>
    </location>
</feature>
<feature type="transmembrane region" description="Helical" evidence="1">
    <location>
        <begin position="185"/>
        <end position="205"/>
    </location>
</feature>
<feature type="transmembrane region" description="Helical" evidence="1">
    <location>
        <begin position="221"/>
        <end position="241"/>
    </location>
</feature>
<feature type="transmembrane region" description="Helical" evidence="1">
    <location>
        <begin position="271"/>
        <end position="291"/>
    </location>
</feature>
<feature type="transmembrane region" description="Helical" evidence="1">
    <location>
        <begin position="293"/>
        <end position="313"/>
    </location>
</feature>
<feature type="transmembrane region" description="Helical" evidence="1">
    <location>
        <begin position="334"/>
        <end position="354"/>
    </location>
</feature>
<feature type="transmembrane region" description="Helical" evidence="1">
    <location>
        <begin position="363"/>
        <end position="383"/>
    </location>
</feature>
<feature type="domain" description="RCK C-terminal" evidence="1">
    <location>
        <begin position="403"/>
        <end position="485"/>
    </location>
</feature>
<sequence>MDAATIISLFILGSILVTSSILLSSFSSRLGIPILVIFLAIGMLAGVDGIGGIPFDNYPFAYMVSNLALAIILLDGGMRTQASSFRVALGPALSLATLGVLITSGLTGMMAAWLFHLDLIEGLLIGAIVGSTDAAAVFSLLGGKGLNERVGSTLEIESGSNDPMAVFLTITLIEMIQKHETGLDWMFAVHIIQQFGLGIVFGLGGGYLLQQMINRISLPSGLYPMLALSGGILIFALTTALEGSGILAVYLCGFLLGNRPIRNRYGILQNFDGLAWLAQIAMFLVLGLLVTPSDLWPIAVPALILSIWMIFFARPLSVFTGLLPFRGFNLRERIFISWVGLRGAVPIILAVFPMMAGLENARLFFNVAFFVVLVSLLLQGTSLSWAAKRAKVVVPPVGWPVSRVGLDIHPDNPWEQFIYQLSADKWCVGAALRDLHMPNETRIAALFRNNELFHPTGSTRLQEGDVLCVIGRERDLPALGKLFSQSPPVSLDQRFFGDFILEANAKFADVALIYGLEEGTEYRDKQQTLGEIIQQLLGAAPVVGDQVEFGGMIWTVAEKEDNVVRKIGVRVAEDEAE</sequence>
<reference key="1">
    <citation type="submission" date="2007-11" db="EMBL/GenBank/DDBJ databases">
        <authorList>
            <consortium name="The Salmonella enterica serovar Paratyphi B Genome Sequencing Project"/>
            <person name="McClelland M."/>
            <person name="Sanderson E.K."/>
            <person name="Porwollik S."/>
            <person name="Spieth J."/>
            <person name="Clifton W.S."/>
            <person name="Fulton R."/>
            <person name="Cordes M."/>
            <person name="Wollam A."/>
            <person name="Shah N."/>
            <person name="Pepin K."/>
            <person name="Bhonagiri V."/>
            <person name="Nash W."/>
            <person name="Johnson M."/>
            <person name="Thiruvilangam P."/>
            <person name="Wilson R."/>
        </authorList>
    </citation>
    <scope>NUCLEOTIDE SEQUENCE [LARGE SCALE GENOMIC DNA]</scope>
    <source>
        <strain>ATCC BAA-1250 / SPB7</strain>
    </source>
</reference>
<gene>
    <name evidence="1" type="primary">nhaP2</name>
    <name type="synonym">cvrA</name>
    <name type="ordered locus">SPAB_01418</name>
</gene>
<proteinExistence type="inferred from homology"/>
<accession>A9MVW9</accession>
<name>NHAP2_SALPB</name>